<sequence>MASPNPAQSTTILFRRLTWQSAVTISIRLADGEPGAGNACDRYYIKAPRYSYLPLFIPEIRENLVELALDDAQLEQIDEKNWWFEEEVSEEDKQRFVRQGACRWHWPIDLVDIHSFISRPQPLPSSIELSSTPRVISLLLHLSNPPQDRLLMPNSIEVCKSQWLNQVKEADFVRWRNTNRVTNLRRVDLEAGWDGIVNNDFDLYAQMVNKIVPLPLLTSSNSTQPSRPSSADPSGPPRAPDSSYATRAIPFKIYLPDNAPVIQEIVPPISESGKPTTLLAVLQVHLPLLFPISSENPYELAFPIAQGILIPQEAEVAWIASCLCGVDGWVRVGVCLSAA</sequence>
<dbReference type="EMBL" id="AE017356">
    <property type="protein sequence ID" value="AAW47209.1"/>
    <property type="molecule type" value="Genomic_DNA"/>
</dbReference>
<dbReference type="RefSeq" id="XP_568726.1">
    <property type="nucleotide sequence ID" value="XM_568726.1"/>
</dbReference>
<dbReference type="SMR" id="P0CM36"/>
<dbReference type="FunCoup" id="P0CM36">
    <property type="interactions" value="204"/>
</dbReference>
<dbReference type="STRING" id="214684.P0CM36"/>
<dbReference type="PaxDb" id="214684-P0CM36"/>
<dbReference type="EnsemblFungi" id="AAW47209">
    <property type="protein sequence ID" value="AAW47209"/>
    <property type="gene ID" value="CNN02410"/>
</dbReference>
<dbReference type="GeneID" id="3255538"/>
<dbReference type="KEGG" id="cne:CNN02410"/>
<dbReference type="VEuPathDB" id="FungiDB:CNN02410"/>
<dbReference type="eggNOG" id="KOG2976">
    <property type="taxonomic scope" value="Eukaryota"/>
</dbReference>
<dbReference type="HOGENOM" id="CLU_051894_2_1_1"/>
<dbReference type="InParanoid" id="P0CM36"/>
<dbReference type="OMA" id="SASMHTR"/>
<dbReference type="OrthoDB" id="272162at2759"/>
<dbReference type="Proteomes" id="UP000002149">
    <property type="component" value="Chromosome 14"/>
</dbReference>
<dbReference type="GO" id="GO:0034274">
    <property type="term" value="C:Atg12-Atg5-Atg16 complex"/>
    <property type="evidence" value="ECO:0000318"/>
    <property type="project" value="GO_Central"/>
</dbReference>
<dbReference type="GO" id="GO:0005776">
    <property type="term" value="C:autophagosome"/>
    <property type="evidence" value="ECO:0000318"/>
    <property type="project" value="GO_Central"/>
</dbReference>
<dbReference type="GO" id="GO:0061908">
    <property type="term" value="C:phagophore"/>
    <property type="evidence" value="ECO:0000318"/>
    <property type="project" value="GO_Central"/>
</dbReference>
<dbReference type="GO" id="GO:0034045">
    <property type="term" value="C:phagophore assembly site membrane"/>
    <property type="evidence" value="ECO:0000318"/>
    <property type="project" value="GO_Central"/>
</dbReference>
<dbReference type="GO" id="GO:0035973">
    <property type="term" value="P:aggrephagy"/>
    <property type="evidence" value="ECO:0000318"/>
    <property type="project" value="GO_Central"/>
</dbReference>
<dbReference type="GO" id="GO:0000045">
    <property type="term" value="P:autophagosome assembly"/>
    <property type="evidence" value="ECO:0000318"/>
    <property type="project" value="GO_Central"/>
</dbReference>
<dbReference type="GO" id="GO:0006995">
    <property type="term" value="P:cellular response to nitrogen starvation"/>
    <property type="evidence" value="ECO:0000318"/>
    <property type="project" value="GO_Central"/>
</dbReference>
<dbReference type="GO" id="GO:0000423">
    <property type="term" value="P:mitophagy"/>
    <property type="evidence" value="ECO:0000318"/>
    <property type="project" value="GO_Central"/>
</dbReference>
<dbReference type="GO" id="GO:0034727">
    <property type="term" value="P:piecemeal microautophagy of the nucleus"/>
    <property type="evidence" value="ECO:0000318"/>
    <property type="project" value="GO_Central"/>
</dbReference>
<dbReference type="GO" id="GO:0015031">
    <property type="term" value="P:protein transport"/>
    <property type="evidence" value="ECO:0007669"/>
    <property type="project" value="UniProtKB-KW"/>
</dbReference>
<dbReference type="FunFam" id="1.10.246.190:FF:000003">
    <property type="entry name" value="Autophagy protein 5"/>
    <property type="match status" value="1"/>
</dbReference>
<dbReference type="FunFam" id="3.10.20.90:FF:000347">
    <property type="entry name" value="Autophagy protein 5"/>
    <property type="match status" value="1"/>
</dbReference>
<dbReference type="Gene3D" id="3.10.20.620">
    <property type="match status" value="1"/>
</dbReference>
<dbReference type="Gene3D" id="1.10.246.190">
    <property type="entry name" value="Autophagy protein Apg5, helix rich domain"/>
    <property type="match status" value="1"/>
</dbReference>
<dbReference type="Gene3D" id="3.10.20.90">
    <property type="entry name" value="Phosphatidylinositol 3-kinase Catalytic Subunit, Chain A, domain 1"/>
    <property type="match status" value="1"/>
</dbReference>
<dbReference type="InterPro" id="IPR007239">
    <property type="entry name" value="Atg5"/>
</dbReference>
<dbReference type="InterPro" id="IPR048940">
    <property type="entry name" value="ATG5_HBR"/>
</dbReference>
<dbReference type="InterPro" id="IPR042526">
    <property type="entry name" value="Atg5_HR"/>
</dbReference>
<dbReference type="InterPro" id="IPR048939">
    <property type="entry name" value="ATG5_UblA"/>
</dbReference>
<dbReference type="InterPro" id="IPR042527">
    <property type="entry name" value="Atg5_UblA_dom_sf"/>
</dbReference>
<dbReference type="InterPro" id="IPR048318">
    <property type="entry name" value="ATG5_UblB"/>
</dbReference>
<dbReference type="PANTHER" id="PTHR13040">
    <property type="entry name" value="AUTOPHAGY PROTEIN 5"/>
    <property type="match status" value="1"/>
</dbReference>
<dbReference type="PANTHER" id="PTHR13040:SF2">
    <property type="entry name" value="AUTOPHAGY PROTEIN 5"/>
    <property type="match status" value="1"/>
</dbReference>
<dbReference type="Pfam" id="PF20637">
    <property type="entry name" value="ATG5_HBR"/>
    <property type="match status" value="1"/>
</dbReference>
<dbReference type="Pfam" id="PF20638">
    <property type="entry name" value="ATG5_UblA"/>
    <property type="match status" value="1"/>
</dbReference>
<dbReference type="Pfam" id="PF04106">
    <property type="entry name" value="ATG5_UblB"/>
    <property type="match status" value="1"/>
</dbReference>
<feature type="chain" id="PRO_0000219002" description="Autophagy protein 5">
    <location>
        <begin position="1"/>
        <end position="339"/>
    </location>
</feature>
<feature type="region of interest" description="Disordered" evidence="2">
    <location>
        <begin position="219"/>
        <end position="241"/>
    </location>
</feature>
<feature type="compositionally biased region" description="Low complexity" evidence="2">
    <location>
        <begin position="219"/>
        <end position="230"/>
    </location>
</feature>
<feature type="cross-link" description="Glycyl lysine isopeptide (Lys-Gly) (interchain with G-Cter in ATG12)" evidence="1">
    <location>
        <position position="168"/>
    </location>
</feature>
<name>ATG5_CRYNJ</name>
<accession>P0CM36</accession>
<accession>Q55H73</accession>
<accession>Q5K6S9</accession>
<proteinExistence type="inferred from homology"/>
<protein>
    <recommendedName>
        <fullName>Autophagy protein 5</fullName>
    </recommendedName>
</protein>
<comment type="function">
    <text evidence="1">Involved in cytoplasm to vacuole transport (Cvt) and autophagic vesicle formation. Autophagy is essential for maintenance of amino acid levels and protein synthesis under nitrogen starvation. Required for selective autophagic degradation of the nucleus (nucleophagy). Also required for mitophagy, which eliminates defective or superfluous mitochondria in order to fulfill cellular energy requirements and prevent excess ROS production. Conjugation with ATG12, through a ubiquitin-like conjugating system involving ATG7 as an E1-like activating enzyme and ATG10 as an E2-like conjugating enzyme, is essential for its function. The ATG12-ATG5 conjugate acts as an E3-like enzyme which is required for lipidation of ATG8 and ATG8 association to the vesicle membranes (By similarity).</text>
</comment>
<comment type="subunit">
    <text evidence="1">Conjugated with ATG12.</text>
</comment>
<comment type="subcellular location">
    <subcellularLocation>
        <location evidence="1">Preautophagosomal structure membrane</location>
        <topology evidence="1">Peripheral membrane protein</topology>
    </subcellularLocation>
</comment>
<comment type="PTM">
    <text evidence="1">Conjugated to ATG12; which is essential for autophagy.</text>
</comment>
<comment type="similarity">
    <text evidence="3">Belongs to the ATG5 family.</text>
</comment>
<organism>
    <name type="scientific">Cryptococcus neoformans var. neoformans serotype D (strain JEC21 / ATCC MYA-565)</name>
    <name type="common">Filobasidiella neoformans</name>
    <dbReference type="NCBI Taxonomy" id="214684"/>
    <lineage>
        <taxon>Eukaryota</taxon>
        <taxon>Fungi</taxon>
        <taxon>Dikarya</taxon>
        <taxon>Basidiomycota</taxon>
        <taxon>Agaricomycotina</taxon>
        <taxon>Tremellomycetes</taxon>
        <taxon>Tremellales</taxon>
        <taxon>Cryptococcaceae</taxon>
        <taxon>Cryptococcus</taxon>
        <taxon>Cryptococcus neoformans species complex</taxon>
    </lineage>
</organism>
<keyword id="KW-0072">Autophagy</keyword>
<keyword id="KW-1017">Isopeptide bond</keyword>
<keyword id="KW-0472">Membrane</keyword>
<keyword id="KW-0653">Protein transport</keyword>
<keyword id="KW-1185">Reference proteome</keyword>
<keyword id="KW-0813">Transport</keyword>
<keyword id="KW-0832">Ubl conjugation</keyword>
<gene>
    <name type="primary">ATG5</name>
    <name type="ordered locus">CNN02410</name>
</gene>
<reference key="1">
    <citation type="journal article" date="2005" name="Science">
        <title>The genome of the basidiomycetous yeast and human pathogen Cryptococcus neoformans.</title>
        <authorList>
            <person name="Loftus B.J."/>
            <person name="Fung E."/>
            <person name="Roncaglia P."/>
            <person name="Rowley D."/>
            <person name="Amedeo P."/>
            <person name="Bruno D."/>
            <person name="Vamathevan J."/>
            <person name="Miranda M."/>
            <person name="Anderson I.J."/>
            <person name="Fraser J.A."/>
            <person name="Allen J.E."/>
            <person name="Bosdet I.E."/>
            <person name="Brent M.R."/>
            <person name="Chiu R."/>
            <person name="Doering T.L."/>
            <person name="Donlin M.J."/>
            <person name="D'Souza C.A."/>
            <person name="Fox D.S."/>
            <person name="Grinberg V."/>
            <person name="Fu J."/>
            <person name="Fukushima M."/>
            <person name="Haas B.J."/>
            <person name="Huang J.C."/>
            <person name="Janbon G."/>
            <person name="Jones S.J.M."/>
            <person name="Koo H.L."/>
            <person name="Krzywinski M.I."/>
            <person name="Kwon-Chung K.J."/>
            <person name="Lengeler K.B."/>
            <person name="Maiti R."/>
            <person name="Marra M.A."/>
            <person name="Marra R.E."/>
            <person name="Mathewson C.A."/>
            <person name="Mitchell T.G."/>
            <person name="Pertea M."/>
            <person name="Riggs F.R."/>
            <person name="Salzberg S.L."/>
            <person name="Schein J.E."/>
            <person name="Shvartsbeyn A."/>
            <person name="Shin H."/>
            <person name="Shumway M."/>
            <person name="Specht C.A."/>
            <person name="Suh B.B."/>
            <person name="Tenney A."/>
            <person name="Utterback T.R."/>
            <person name="Wickes B.L."/>
            <person name="Wortman J.R."/>
            <person name="Wye N.H."/>
            <person name="Kronstad J.W."/>
            <person name="Lodge J.K."/>
            <person name="Heitman J."/>
            <person name="Davis R.W."/>
            <person name="Fraser C.M."/>
            <person name="Hyman R.W."/>
        </authorList>
    </citation>
    <scope>NUCLEOTIDE SEQUENCE [LARGE SCALE GENOMIC DNA]</scope>
    <source>
        <strain>JEC21 / ATCC MYA-565</strain>
    </source>
</reference>
<evidence type="ECO:0000250" key="1"/>
<evidence type="ECO:0000256" key="2">
    <source>
        <dbReference type="SAM" id="MobiDB-lite"/>
    </source>
</evidence>
<evidence type="ECO:0000305" key="3"/>